<name>MDM10_CHAGB</name>
<reference key="1">
    <citation type="journal article" date="2015" name="Genome Announc.">
        <title>Draft genome sequence of the cellulolytic fungus Chaetomium globosum.</title>
        <authorList>
            <person name="Cuomo C.A."/>
            <person name="Untereiner W.A."/>
            <person name="Ma L.-J."/>
            <person name="Grabherr M."/>
            <person name="Birren B.W."/>
        </authorList>
    </citation>
    <scope>NUCLEOTIDE SEQUENCE [LARGE SCALE GENOMIC DNA]</scope>
    <source>
        <strain>ATCC 6205 / CBS 148.51 / DSM 1962 / NBRC 6347 / NRRL 1970</strain>
    </source>
</reference>
<comment type="function">
    <text evidence="1">Component of the ERMES/MDM complex, which serves as a molecular tether to connect the endoplasmic reticulum and mitochondria. Components of this complex are involved in the control of mitochondrial shape and protein biogenesis and may function in phospholipid exchange. MDM10 is involved in the late assembly steps of the general translocase of the mitochondrial outer membrane (TOM complex). Functions in the TOM40-specific route of the assembly of outer membrane beta-barrel proteins, including the association of TOM40 with the receptor TOM22 and small TOM proteins. Can associate with the SAM(core) complex as well as the MDM12-MMM1 complex, both involved in late steps of the major beta-barrel assembly pathway, that is responsible for biogenesis of all outer membrane beta-barrel proteins. May act as a switch that shuttles between both complexes and channels precursor proteins into the TOM40-specific pathway. Plays a role in mitochondrial morphology and in the inheritance of mitochondria.</text>
</comment>
<comment type="subunit">
    <text evidence="1">Component of the ER-mitochondria encounter structure (ERMES) or MDM complex, composed of MMM1, MDM10, MDM12 and MDM34. Associates with the mitochondrial outer membrane sorting assembly machinery SAM(core) complex.</text>
</comment>
<comment type="subcellular location">
    <subcellularLocation>
        <location evidence="1">Mitochondrion outer membrane</location>
        <topology evidence="1">Multi-pass membrane protein</topology>
    </subcellularLocation>
    <text evidence="1">The ERMES/MDM complex localizes to a few discrete foci (around 10 per single cell), that represent mitochondria-endoplasmic reticulum junctions. These foci are often found next to mtDNA nucleoids.</text>
</comment>
<comment type="domain">
    <text>Lacks alpha-helical transmembrane segments, suggesting that it resides in the membrane via beta-sheet conformations similar to those predicted for other outer membrane proteins and porin.</text>
</comment>
<comment type="similarity">
    <text evidence="1">Belongs to the MDM10 family.</text>
</comment>
<comment type="sequence caution" evidence="3">
    <conflict type="erroneous gene model prediction">
        <sequence resource="EMBL-CDS" id="EAQ88906"/>
    </conflict>
</comment>
<organism>
    <name type="scientific">Chaetomium globosum (strain ATCC 6205 / CBS 148.51 / DSM 1962 / NBRC 6347 / NRRL 1970)</name>
    <name type="common">Soil fungus</name>
    <dbReference type="NCBI Taxonomy" id="306901"/>
    <lineage>
        <taxon>Eukaryota</taxon>
        <taxon>Fungi</taxon>
        <taxon>Dikarya</taxon>
        <taxon>Ascomycota</taxon>
        <taxon>Pezizomycotina</taxon>
        <taxon>Sordariomycetes</taxon>
        <taxon>Sordariomycetidae</taxon>
        <taxon>Sordariales</taxon>
        <taxon>Chaetomiaceae</taxon>
        <taxon>Chaetomium</taxon>
    </lineage>
</organism>
<sequence>MREFMHYVTNAFYGATGWNDDNTYKELNVTARELIDFPLPRGLRLTLSSLATPHFATSYQLGSVGIVDGSISYLHSSVPLTGIAARSDRIPLPALLRSYRRLHDLGSKDQQQYVGAEHAPTESTPPAVAKVDGSSLLYGRLYLPQSLLEGMVVRRFTPALQVQLSAVSERSLRNGGTLLGLVQYDKRKYGVEGLASTDGGLLGVRGLYNFGGDASSSAMNPPSGTSASETNGSGPSVEKERIYGRFSAGAELYYGTLNKSGGMSLGARFATLPAHRGTPLTATLTINPLMGNINATYAVLAREYCSLATKMEFNVYSYESEWAVGVELWSNRRPAGFLLGANPNDQAEPAPEPPRKSNERSFQAKMEWRLDDPEPEPQSPVAGEKSADDGPKEEYKGVLKARFDQNFRFGLLWEGRVKSLIFSLGTGRSD</sequence>
<feature type="chain" id="PRO_0000384173" description="Mitochondrial distribution and morphology protein 10">
    <location>
        <begin position="1"/>
        <end position="430"/>
    </location>
</feature>
<feature type="region of interest" description="Disordered" evidence="2">
    <location>
        <begin position="215"/>
        <end position="237"/>
    </location>
</feature>
<feature type="region of interest" description="Disordered" evidence="2">
    <location>
        <begin position="339"/>
        <end position="393"/>
    </location>
</feature>
<feature type="compositionally biased region" description="Polar residues" evidence="2">
    <location>
        <begin position="215"/>
        <end position="234"/>
    </location>
</feature>
<keyword id="KW-0472">Membrane</keyword>
<keyword id="KW-0496">Mitochondrion</keyword>
<keyword id="KW-1000">Mitochondrion outer membrane</keyword>
<keyword id="KW-1185">Reference proteome</keyword>
<keyword id="KW-0812">Transmembrane</keyword>
<keyword id="KW-1134">Transmembrane beta strand</keyword>
<evidence type="ECO:0000255" key="1">
    <source>
        <dbReference type="HAMAP-Rule" id="MF_03102"/>
    </source>
</evidence>
<evidence type="ECO:0000256" key="2">
    <source>
        <dbReference type="SAM" id="MobiDB-lite"/>
    </source>
</evidence>
<evidence type="ECO:0000305" key="3"/>
<dbReference type="EMBL" id="CH408031">
    <property type="protein sequence ID" value="EAQ88906.1"/>
    <property type="status" value="ALT_SEQ"/>
    <property type="molecule type" value="Genomic_DNA"/>
</dbReference>
<dbReference type="RefSeq" id="XP_001221620.1">
    <property type="nucleotide sequence ID" value="XM_001221619.1"/>
</dbReference>
<dbReference type="SMR" id="Q2H740"/>
<dbReference type="FunCoup" id="Q2H740">
    <property type="interactions" value="45"/>
</dbReference>
<dbReference type="STRING" id="306901.Q2H740"/>
<dbReference type="GeneID" id="4391369"/>
<dbReference type="VEuPathDB" id="FungiDB:CHGG_05525"/>
<dbReference type="HOGENOM" id="CLU_026505_0_0_1"/>
<dbReference type="InParanoid" id="Q2H740"/>
<dbReference type="OrthoDB" id="2103793at2759"/>
<dbReference type="Proteomes" id="UP000001056">
    <property type="component" value="Unassembled WGS sequence"/>
</dbReference>
<dbReference type="GO" id="GO:0032865">
    <property type="term" value="C:ERMES complex"/>
    <property type="evidence" value="ECO:0007669"/>
    <property type="project" value="UniProtKB-UniRule"/>
</dbReference>
<dbReference type="GO" id="GO:0001401">
    <property type="term" value="C:SAM complex"/>
    <property type="evidence" value="ECO:0007669"/>
    <property type="project" value="TreeGrafter"/>
</dbReference>
<dbReference type="GO" id="GO:0051654">
    <property type="term" value="P:establishment of mitochondrion localization"/>
    <property type="evidence" value="ECO:0007669"/>
    <property type="project" value="TreeGrafter"/>
</dbReference>
<dbReference type="GO" id="GO:0000002">
    <property type="term" value="P:mitochondrial genome maintenance"/>
    <property type="evidence" value="ECO:0007669"/>
    <property type="project" value="UniProtKB-UniRule"/>
</dbReference>
<dbReference type="GO" id="GO:0070096">
    <property type="term" value="P:mitochondrial outer membrane translocase complex assembly"/>
    <property type="evidence" value="ECO:0007669"/>
    <property type="project" value="UniProtKB-UniRule"/>
</dbReference>
<dbReference type="GO" id="GO:1990456">
    <property type="term" value="P:mitochondrion-endoplasmic reticulum membrane tethering"/>
    <property type="evidence" value="ECO:0007669"/>
    <property type="project" value="UniProtKB-UniRule"/>
</dbReference>
<dbReference type="GO" id="GO:0015914">
    <property type="term" value="P:phospholipid transport"/>
    <property type="evidence" value="ECO:0007669"/>
    <property type="project" value="TreeGrafter"/>
</dbReference>
<dbReference type="GO" id="GO:0045040">
    <property type="term" value="P:protein insertion into mitochondrial outer membrane"/>
    <property type="evidence" value="ECO:0007669"/>
    <property type="project" value="UniProtKB-UniRule"/>
</dbReference>
<dbReference type="HAMAP" id="MF_03102">
    <property type="entry name" value="Mdm10"/>
    <property type="match status" value="1"/>
</dbReference>
<dbReference type="InterPro" id="IPR027539">
    <property type="entry name" value="Mdm10"/>
</dbReference>
<dbReference type="PANTHER" id="PTHR28035">
    <property type="entry name" value="MITOCHONDRIAL DISTRIBUTION AND MORPHOLOGY PROTEIN 10"/>
    <property type="match status" value="1"/>
</dbReference>
<dbReference type="PANTHER" id="PTHR28035:SF1">
    <property type="entry name" value="MITOCHONDRIAL DISTRIBUTION AND MORPHOLOGY PROTEIN 10"/>
    <property type="match status" value="1"/>
</dbReference>
<dbReference type="Pfam" id="PF12519">
    <property type="entry name" value="MDM10"/>
    <property type="match status" value="1"/>
</dbReference>
<protein>
    <recommendedName>
        <fullName evidence="1">Mitochondrial distribution and morphology protein 10</fullName>
    </recommendedName>
    <alternativeName>
        <fullName evidence="1">Mitochondrial inheritance component MDM10</fullName>
    </alternativeName>
</protein>
<accession>Q2H740</accession>
<gene>
    <name evidence="1" type="primary">MDM10</name>
    <name type="ORF">CHGG_05525</name>
</gene>
<proteinExistence type="inferred from homology"/>